<accession>Q36309</accession>
<dbReference type="EC" id="7.1.1.9"/>
<dbReference type="EMBL" id="X69067">
    <property type="protein sequence ID" value="CAA48810.1"/>
    <property type="molecule type" value="Genomic_DNA"/>
</dbReference>
<dbReference type="PIR" id="S60642">
    <property type="entry name" value="S60642"/>
</dbReference>
<dbReference type="SMR" id="Q36309"/>
<dbReference type="KEGG" id="afra:807791"/>
<dbReference type="CTD" id="4514"/>
<dbReference type="GO" id="GO:0005743">
    <property type="term" value="C:mitochondrial inner membrane"/>
    <property type="evidence" value="ECO:0007669"/>
    <property type="project" value="UniProtKB-SubCell"/>
</dbReference>
<dbReference type="GO" id="GO:0004129">
    <property type="term" value="F:cytochrome-c oxidase activity"/>
    <property type="evidence" value="ECO:0007669"/>
    <property type="project" value="UniProtKB-EC"/>
</dbReference>
<dbReference type="GO" id="GO:0006123">
    <property type="term" value="P:mitochondrial electron transport, cytochrome c to oxygen"/>
    <property type="evidence" value="ECO:0007669"/>
    <property type="project" value="TreeGrafter"/>
</dbReference>
<dbReference type="CDD" id="cd01665">
    <property type="entry name" value="Cyt_c_Oxidase_III"/>
    <property type="match status" value="1"/>
</dbReference>
<dbReference type="FunFam" id="1.20.120.80:FF:000002">
    <property type="entry name" value="Cytochrome c oxidase subunit 3"/>
    <property type="match status" value="1"/>
</dbReference>
<dbReference type="Gene3D" id="1.10.287.70">
    <property type="match status" value="1"/>
</dbReference>
<dbReference type="Gene3D" id="1.20.120.80">
    <property type="entry name" value="Cytochrome c oxidase, subunit III, four-helix bundle"/>
    <property type="match status" value="1"/>
</dbReference>
<dbReference type="InterPro" id="IPR024791">
    <property type="entry name" value="Cyt_c/ubiquinol_Oxase_su3"/>
</dbReference>
<dbReference type="InterPro" id="IPR033945">
    <property type="entry name" value="Cyt_c_oxase_su3_dom"/>
</dbReference>
<dbReference type="InterPro" id="IPR000298">
    <property type="entry name" value="Cyt_c_oxidase-like_su3"/>
</dbReference>
<dbReference type="InterPro" id="IPR035973">
    <property type="entry name" value="Cyt_c_oxidase_su3-like_sf"/>
</dbReference>
<dbReference type="InterPro" id="IPR013833">
    <property type="entry name" value="Cyt_c_oxidase_su3_a-hlx"/>
</dbReference>
<dbReference type="PANTHER" id="PTHR11403:SF7">
    <property type="entry name" value="CYTOCHROME C OXIDASE SUBUNIT 3"/>
    <property type="match status" value="1"/>
</dbReference>
<dbReference type="PANTHER" id="PTHR11403">
    <property type="entry name" value="CYTOCHROME C OXIDASE SUBUNIT III"/>
    <property type="match status" value="1"/>
</dbReference>
<dbReference type="Pfam" id="PF00510">
    <property type="entry name" value="COX3"/>
    <property type="match status" value="1"/>
</dbReference>
<dbReference type="SUPFAM" id="SSF81452">
    <property type="entry name" value="Cytochrome c oxidase subunit III-like"/>
    <property type="match status" value="1"/>
</dbReference>
<dbReference type="PROSITE" id="PS50253">
    <property type="entry name" value="COX3"/>
    <property type="match status" value="1"/>
</dbReference>
<feature type="chain" id="PRO_0000183740" description="Cytochrome c oxidase subunit 3">
    <location>
        <begin position="1"/>
        <end position="257"/>
    </location>
</feature>
<feature type="transmembrane region" description="Helical" evidence="2">
    <location>
        <begin position="15"/>
        <end position="35"/>
    </location>
</feature>
<feature type="transmembrane region" description="Helical" evidence="2">
    <location>
        <begin position="82"/>
        <end position="102"/>
    </location>
</feature>
<feature type="transmembrane region" description="Helical" evidence="2">
    <location>
        <begin position="124"/>
        <end position="144"/>
    </location>
</feature>
<feature type="transmembrane region" description="Helical" evidence="2">
    <location>
        <begin position="156"/>
        <end position="176"/>
    </location>
</feature>
<feature type="transmembrane region" description="Helical" evidence="2">
    <location>
        <begin position="194"/>
        <end position="214"/>
    </location>
</feature>
<feature type="transmembrane region" description="Helical" evidence="2">
    <location>
        <begin position="235"/>
        <end position="255"/>
    </location>
</feature>
<geneLocation type="mitochondrion"/>
<evidence type="ECO:0000250" key="1">
    <source>
        <dbReference type="UniProtKB" id="P00420"/>
    </source>
</evidence>
<evidence type="ECO:0000255" key="2"/>
<evidence type="ECO:0000305" key="3"/>
<reference key="1">
    <citation type="journal article" date="1994" name="J. Mol. Evol.">
        <title>Speciation in the Artemia genus: mitochondrial DNA analysis of bisexual and parthenogenetic brine shrimps.</title>
        <authorList>
            <person name="Perez M.L."/>
            <person name="Valverde J.R."/>
            <person name="Batuecas B."/>
            <person name="Amat F."/>
            <person name="Marco R."/>
            <person name="Garesse R."/>
        </authorList>
    </citation>
    <scope>NUCLEOTIDE SEQUENCE [GENOMIC DNA]</scope>
</reference>
<keyword id="KW-0472">Membrane</keyword>
<keyword id="KW-0496">Mitochondrion</keyword>
<keyword id="KW-0999">Mitochondrion inner membrane</keyword>
<keyword id="KW-1278">Translocase</keyword>
<keyword id="KW-0812">Transmembrane</keyword>
<keyword id="KW-1133">Transmembrane helix</keyword>
<protein>
    <recommendedName>
        <fullName>Cytochrome c oxidase subunit 3</fullName>
        <ecNumber>7.1.1.9</ecNumber>
    </recommendedName>
    <alternativeName>
        <fullName>Cytochrome c oxidase polypeptide III</fullName>
    </alternativeName>
</protein>
<proteinExistence type="inferred from homology"/>
<name>COX3_ARTSF</name>
<sequence length="257" mass="29632">MNQLNHPYHLVNISPWPLATGMGAFAMTSGLVKWFHSFDSMLFFTGINNNHICFDQWWRDVSREATFQGMHSTKVGFGLRWGMILFIISEVFFFVSFFWGFFHSSLSPNIEVGALWPPSEVESFLSALLNTSILLASGVTVTWAHHALMENNFDQCLQGLLFTVLLGLYFSFLQGLEYMEASFTIADSIYGSTFFLATGFHGLHVLIGTIFLMICILRHAKCYFSQHHFGFEAAAWYWHFVDVVWLFLYLSIYWWGE</sequence>
<gene>
    <name type="primary">COIII</name>
    <name type="synonym">CO-III</name>
</gene>
<comment type="function">
    <text evidence="1">Component of the cytochrome c oxidase, the last enzyme in the mitochondrial electron transport chain which drives oxidative phosphorylation. The respiratory chain contains 3 multisubunit complexes succinate dehydrogenase (complex II, CII), ubiquinol-cytochrome c oxidoreductase (cytochrome b-c1 complex, complex III, CIII) and cytochrome c oxidase (complex IV, CIV), that cooperate to transfer electrons derived from NADH and succinate to molecular oxygen, creating an electrochemical gradient over the inner membrane that drives transmembrane transport and the ATP synthase. Cytochrome c oxidase is the component of the respiratory chain that catalyzes the reduction of oxygen to water. Electrons originating from reduced cytochrome c in the intermembrane space (IMS) are transferred via the dinuclear copper A center (CU(A)) of subunit 2 and heme A of subunit 1 to the active site in subunit 1, a binuclear center (BNC) formed by heme A3 and copper B (CU(B)). The BNC reduces molecular oxygen to 2 water molecules using 4 electrons from cytochrome c in the IMS and 4 protons from the mitochondrial matrix.</text>
</comment>
<comment type="catalytic activity">
    <reaction evidence="1">
        <text>4 Fe(II)-[cytochrome c] + O2 + 8 H(+)(in) = 4 Fe(III)-[cytochrome c] + 2 H2O + 4 H(+)(out)</text>
        <dbReference type="Rhea" id="RHEA:11436"/>
        <dbReference type="Rhea" id="RHEA-COMP:10350"/>
        <dbReference type="Rhea" id="RHEA-COMP:14399"/>
        <dbReference type="ChEBI" id="CHEBI:15377"/>
        <dbReference type="ChEBI" id="CHEBI:15378"/>
        <dbReference type="ChEBI" id="CHEBI:15379"/>
        <dbReference type="ChEBI" id="CHEBI:29033"/>
        <dbReference type="ChEBI" id="CHEBI:29034"/>
        <dbReference type="EC" id="7.1.1.9"/>
    </reaction>
    <physiologicalReaction direction="left-to-right" evidence="1">
        <dbReference type="Rhea" id="RHEA:11437"/>
    </physiologicalReaction>
</comment>
<comment type="subunit">
    <text evidence="1">Component of the cytochrome c oxidase (complex IV, CIV), a multisubunit enzyme composed of a catalytic core of 3 subunits and several supernumerary subunits. The complex exists as a monomer or a dimer and forms supercomplexes (SCs) in the inner mitochondrial membrane with ubiquinol-cytochrome c oxidoreductase (cytochrome b-c1 complex, complex III, CIII).</text>
</comment>
<comment type="subcellular location">
    <subcellularLocation>
        <location evidence="1">Mitochondrion inner membrane</location>
        <topology evidence="1">Multi-pass membrane protein</topology>
    </subcellularLocation>
</comment>
<comment type="similarity">
    <text evidence="3">Belongs to the cytochrome c oxidase subunit 3 family.</text>
</comment>
<organism>
    <name type="scientific">Artemia franciscana</name>
    <name type="common">Brine shrimp</name>
    <name type="synonym">Artemia sanfranciscana</name>
    <dbReference type="NCBI Taxonomy" id="6661"/>
    <lineage>
        <taxon>Eukaryota</taxon>
        <taxon>Metazoa</taxon>
        <taxon>Ecdysozoa</taxon>
        <taxon>Arthropoda</taxon>
        <taxon>Crustacea</taxon>
        <taxon>Branchiopoda</taxon>
        <taxon>Anostraca</taxon>
        <taxon>Artemiidae</taxon>
        <taxon>Artemia</taxon>
    </lineage>
</organism>